<dbReference type="EC" id="5.3.1.16" evidence="1"/>
<dbReference type="EMBL" id="CP000447">
    <property type="protein sequence ID" value="ABI71565.1"/>
    <property type="molecule type" value="Genomic_DNA"/>
</dbReference>
<dbReference type="RefSeq" id="WP_011637181.1">
    <property type="nucleotide sequence ID" value="NC_008345.1"/>
</dbReference>
<dbReference type="SMR" id="Q083K0"/>
<dbReference type="STRING" id="318167.Sfri_1715"/>
<dbReference type="KEGG" id="sfr:Sfri_1715"/>
<dbReference type="eggNOG" id="COG0106">
    <property type="taxonomic scope" value="Bacteria"/>
</dbReference>
<dbReference type="HOGENOM" id="CLU_048577_1_2_6"/>
<dbReference type="OrthoDB" id="9807749at2"/>
<dbReference type="UniPathway" id="UPA00031">
    <property type="reaction ID" value="UER00009"/>
</dbReference>
<dbReference type="Proteomes" id="UP000000684">
    <property type="component" value="Chromosome"/>
</dbReference>
<dbReference type="GO" id="GO:0005737">
    <property type="term" value="C:cytoplasm"/>
    <property type="evidence" value="ECO:0007669"/>
    <property type="project" value="UniProtKB-SubCell"/>
</dbReference>
<dbReference type="GO" id="GO:0003949">
    <property type="term" value="F:1-(5-phosphoribosyl)-5-[(5-phosphoribosylamino)methylideneamino]imidazole-4-carboxamide isomerase activity"/>
    <property type="evidence" value="ECO:0007669"/>
    <property type="project" value="UniProtKB-UniRule"/>
</dbReference>
<dbReference type="GO" id="GO:0000105">
    <property type="term" value="P:L-histidine biosynthetic process"/>
    <property type="evidence" value="ECO:0007669"/>
    <property type="project" value="UniProtKB-UniRule"/>
</dbReference>
<dbReference type="GO" id="GO:0000162">
    <property type="term" value="P:L-tryptophan biosynthetic process"/>
    <property type="evidence" value="ECO:0007669"/>
    <property type="project" value="TreeGrafter"/>
</dbReference>
<dbReference type="CDD" id="cd04732">
    <property type="entry name" value="HisA"/>
    <property type="match status" value="1"/>
</dbReference>
<dbReference type="FunFam" id="3.20.20.70:FF:000009">
    <property type="entry name" value="1-(5-phosphoribosyl)-5-[(5-phosphoribosylamino)methylideneamino] imidazole-4-carboxamide isomerase"/>
    <property type="match status" value="1"/>
</dbReference>
<dbReference type="Gene3D" id="3.20.20.70">
    <property type="entry name" value="Aldolase class I"/>
    <property type="match status" value="1"/>
</dbReference>
<dbReference type="HAMAP" id="MF_01014">
    <property type="entry name" value="HisA"/>
    <property type="match status" value="1"/>
</dbReference>
<dbReference type="InterPro" id="IPR013785">
    <property type="entry name" value="Aldolase_TIM"/>
</dbReference>
<dbReference type="InterPro" id="IPR006062">
    <property type="entry name" value="His_biosynth"/>
</dbReference>
<dbReference type="InterPro" id="IPR006063">
    <property type="entry name" value="HisA_bact_arch"/>
</dbReference>
<dbReference type="InterPro" id="IPR044524">
    <property type="entry name" value="Isoase_HisA-like"/>
</dbReference>
<dbReference type="InterPro" id="IPR023016">
    <property type="entry name" value="Isoase_HisA-like_bact"/>
</dbReference>
<dbReference type="InterPro" id="IPR011060">
    <property type="entry name" value="RibuloseP-bd_barrel"/>
</dbReference>
<dbReference type="NCBIfam" id="TIGR00007">
    <property type="entry name" value="1-(5-phosphoribosyl)-5-[(5-phosphoribosylamino)methylideneamino]imidazole-4-carboxamide isomerase"/>
    <property type="match status" value="1"/>
</dbReference>
<dbReference type="PANTHER" id="PTHR43090">
    <property type="entry name" value="1-(5-PHOSPHORIBOSYL)-5-[(5-PHOSPHORIBOSYLAMINO)METHYLIDENEAMINO] IMIDAZOLE-4-CARBOXAMIDE ISOMERASE"/>
    <property type="match status" value="1"/>
</dbReference>
<dbReference type="PANTHER" id="PTHR43090:SF2">
    <property type="entry name" value="1-(5-PHOSPHORIBOSYL)-5-[(5-PHOSPHORIBOSYLAMINO)METHYLIDENEAMINO] IMIDAZOLE-4-CARBOXAMIDE ISOMERASE"/>
    <property type="match status" value="1"/>
</dbReference>
<dbReference type="Pfam" id="PF00977">
    <property type="entry name" value="His_biosynth"/>
    <property type="match status" value="1"/>
</dbReference>
<dbReference type="SUPFAM" id="SSF51366">
    <property type="entry name" value="Ribulose-phoshate binding barrel"/>
    <property type="match status" value="1"/>
</dbReference>
<organism>
    <name type="scientific">Shewanella frigidimarina (strain NCIMB 400)</name>
    <dbReference type="NCBI Taxonomy" id="318167"/>
    <lineage>
        <taxon>Bacteria</taxon>
        <taxon>Pseudomonadati</taxon>
        <taxon>Pseudomonadota</taxon>
        <taxon>Gammaproteobacteria</taxon>
        <taxon>Alteromonadales</taxon>
        <taxon>Shewanellaceae</taxon>
        <taxon>Shewanella</taxon>
    </lineage>
</organism>
<evidence type="ECO:0000255" key="1">
    <source>
        <dbReference type="HAMAP-Rule" id="MF_01014"/>
    </source>
</evidence>
<sequence>MIIPAIDLIDGQVVRLYQGDYDKQTTFDLSPLAQLQSYQAQGAKLLHIVDLTGAKDPNKRQTKLIAELAAGLDVDIQVGGGIRSEDQVAELLAIGVKRVVIGSLAVKEPELVKSWFVKYGSDAICLALDVNINDNGDKIVAVSGWQSGGGKSLESLVAEFETVGLKHALVTDISRDGTLTGANTELYTELAATYPNILWQASGGIATLDNVAAVRDSKASGIIIGKALLINQFTVEEAIQCWPNA</sequence>
<feature type="chain" id="PRO_0000290536" description="1-(5-phosphoribosyl)-5-[(5-phosphoribosylamino)methylideneamino] imidazole-4-carboxamide isomerase">
    <location>
        <begin position="1"/>
        <end position="245"/>
    </location>
</feature>
<feature type="active site" description="Proton acceptor" evidence="1">
    <location>
        <position position="7"/>
    </location>
</feature>
<feature type="active site" description="Proton donor" evidence="1">
    <location>
        <position position="129"/>
    </location>
</feature>
<keyword id="KW-0028">Amino-acid biosynthesis</keyword>
<keyword id="KW-0963">Cytoplasm</keyword>
<keyword id="KW-0368">Histidine biosynthesis</keyword>
<keyword id="KW-0413">Isomerase</keyword>
<keyword id="KW-1185">Reference proteome</keyword>
<proteinExistence type="inferred from homology"/>
<gene>
    <name evidence="1" type="primary">hisA</name>
    <name type="ordered locus">Sfri_1715</name>
</gene>
<comment type="catalytic activity">
    <reaction evidence="1">
        <text>1-(5-phospho-beta-D-ribosyl)-5-[(5-phospho-beta-D-ribosylamino)methylideneamino]imidazole-4-carboxamide = 5-[(5-phospho-1-deoxy-D-ribulos-1-ylimino)methylamino]-1-(5-phospho-beta-D-ribosyl)imidazole-4-carboxamide</text>
        <dbReference type="Rhea" id="RHEA:15469"/>
        <dbReference type="ChEBI" id="CHEBI:58435"/>
        <dbReference type="ChEBI" id="CHEBI:58525"/>
        <dbReference type="EC" id="5.3.1.16"/>
    </reaction>
</comment>
<comment type="pathway">
    <text evidence="1">Amino-acid biosynthesis; L-histidine biosynthesis; L-histidine from 5-phospho-alpha-D-ribose 1-diphosphate: step 4/9.</text>
</comment>
<comment type="subcellular location">
    <subcellularLocation>
        <location evidence="1">Cytoplasm</location>
    </subcellularLocation>
</comment>
<comment type="similarity">
    <text evidence="1">Belongs to the HisA/HisF family.</text>
</comment>
<accession>Q083K0</accession>
<name>HIS4_SHEFN</name>
<reference key="1">
    <citation type="submission" date="2006-08" db="EMBL/GenBank/DDBJ databases">
        <title>Complete sequence of Shewanella frigidimarina NCIMB 400.</title>
        <authorList>
            <consortium name="US DOE Joint Genome Institute"/>
            <person name="Copeland A."/>
            <person name="Lucas S."/>
            <person name="Lapidus A."/>
            <person name="Barry K."/>
            <person name="Detter J.C."/>
            <person name="Glavina del Rio T."/>
            <person name="Hammon N."/>
            <person name="Israni S."/>
            <person name="Dalin E."/>
            <person name="Tice H."/>
            <person name="Pitluck S."/>
            <person name="Fredrickson J.K."/>
            <person name="Kolker E."/>
            <person name="McCuel L.A."/>
            <person name="DiChristina T."/>
            <person name="Nealson K.H."/>
            <person name="Newman D."/>
            <person name="Tiedje J.M."/>
            <person name="Zhou J."/>
            <person name="Romine M.F."/>
            <person name="Culley D.E."/>
            <person name="Serres M."/>
            <person name="Chertkov O."/>
            <person name="Brettin T."/>
            <person name="Bruce D."/>
            <person name="Han C."/>
            <person name="Tapia R."/>
            <person name="Gilna P."/>
            <person name="Schmutz J."/>
            <person name="Larimer F."/>
            <person name="Land M."/>
            <person name="Hauser L."/>
            <person name="Kyrpides N."/>
            <person name="Mikhailova N."/>
            <person name="Richardson P."/>
        </authorList>
    </citation>
    <scope>NUCLEOTIDE SEQUENCE [LARGE SCALE GENOMIC DNA]</scope>
    <source>
        <strain>NCIMB 400</strain>
    </source>
</reference>
<protein>
    <recommendedName>
        <fullName evidence="1">1-(5-phosphoribosyl)-5-[(5-phosphoribosylamino)methylideneamino] imidazole-4-carboxamide isomerase</fullName>
        <ecNumber evidence="1">5.3.1.16</ecNumber>
    </recommendedName>
    <alternativeName>
        <fullName evidence="1">Phosphoribosylformimino-5-aminoimidazole carboxamide ribotide isomerase</fullName>
    </alternativeName>
</protein>